<organism>
    <name type="scientific">Mesoplasma florum (strain ATCC 33453 / NBRC 100688 / NCTC 11704 / L1)</name>
    <name type="common">Acholeplasma florum</name>
    <dbReference type="NCBI Taxonomy" id="265311"/>
    <lineage>
        <taxon>Bacteria</taxon>
        <taxon>Bacillati</taxon>
        <taxon>Mycoplasmatota</taxon>
        <taxon>Mollicutes</taxon>
        <taxon>Entomoplasmatales</taxon>
        <taxon>Entomoplasmataceae</taxon>
        <taxon>Mesoplasma</taxon>
    </lineage>
</organism>
<dbReference type="EC" id="3.1.-.-" evidence="1"/>
<dbReference type="EMBL" id="AE017263">
    <property type="protein sequence ID" value="AAT75822.1"/>
    <property type="molecule type" value="Genomic_DNA"/>
</dbReference>
<dbReference type="RefSeq" id="WP_011183362.1">
    <property type="nucleotide sequence ID" value="NC_006055.1"/>
</dbReference>
<dbReference type="RefSeq" id="YP_053706.1">
    <property type="nucleotide sequence ID" value="NC_006055.1"/>
</dbReference>
<dbReference type="SMR" id="Q6F101"/>
<dbReference type="STRING" id="265311.Mfl464"/>
<dbReference type="PaxDb" id="265311-Mfl464"/>
<dbReference type="EnsemblBacteria" id="AAT75822">
    <property type="protein sequence ID" value="AAT75822"/>
    <property type="gene ID" value="Mfl464"/>
</dbReference>
<dbReference type="GeneID" id="2898210"/>
<dbReference type="KEGG" id="mfl:Mfl464"/>
<dbReference type="PATRIC" id="fig|265311.5.peg.470"/>
<dbReference type="eggNOG" id="COG0816">
    <property type="taxonomic scope" value="Bacteria"/>
</dbReference>
<dbReference type="HOGENOM" id="CLU_098240_2_0_14"/>
<dbReference type="OrthoDB" id="9796140at2"/>
<dbReference type="Proteomes" id="UP000006647">
    <property type="component" value="Chromosome"/>
</dbReference>
<dbReference type="GO" id="GO:0005829">
    <property type="term" value="C:cytosol"/>
    <property type="evidence" value="ECO:0007669"/>
    <property type="project" value="TreeGrafter"/>
</dbReference>
<dbReference type="GO" id="GO:0004518">
    <property type="term" value="F:nuclease activity"/>
    <property type="evidence" value="ECO:0007669"/>
    <property type="project" value="UniProtKB-KW"/>
</dbReference>
<dbReference type="GO" id="GO:0000967">
    <property type="term" value="P:rRNA 5'-end processing"/>
    <property type="evidence" value="ECO:0007669"/>
    <property type="project" value="UniProtKB-UniRule"/>
</dbReference>
<dbReference type="CDD" id="cd16964">
    <property type="entry name" value="YqgF"/>
    <property type="match status" value="1"/>
</dbReference>
<dbReference type="Gene3D" id="3.30.420.140">
    <property type="entry name" value="YqgF/RNase H-like domain"/>
    <property type="match status" value="1"/>
</dbReference>
<dbReference type="HAMAP" id="MF_00651">
    <property type="entry name" value="Nuclease_YqgF"/>
    <property type="match status" value="1"/>
</dbReference>
<dbReference type="InterPro" id="IPR012337">
    <property type="entry name" value="RNaseH-like_sf"/>
</dbReference>
<dbReference type="InterPro" id="IPR005227">
    <property type="entry name" value="YqgF"/>
</dbReference>
<dbReference type="InterPro" id="IPR006641">
    <property type="entry name" value="YqgF/RNaseH-like_dom"/>
</dbReference>
<dbReference type="InterPro" id="IPR037027">
    <property type="entry name" value="YqgF/RNaseH-like_dom_sf"/>
</dbReference>
<dbReference type="NCBIfam" id="TIGR00250">
    <property type="entry name" value="RNAse_H_YqgF"/>
    <property type="match status" value="1"/>
</dbReference>
<dbReference type="PANTHER" id="PTHR33317">
    <property type="entry name" value="POLYNUCLEOTIDYL TRANSFERASE, RIBONUCLEASE H-LIKE SUPERFAMILY PROTEIN"/>
    <property type="match status" value="1"/>
</dbReference>
<dbReference type="PANTHER" id="PTHR33317:SF4">
    <property type="entry name" value="POLYNUCLEOTIDYL TRANSFERASE, RIBONUCLEASE H-LIKE SUPERFAMILY PROTEIN"/>
    <property type="match status" value="1"/>
</dbReference>
<dbReference type="Pfam" id="PF03652">
    <property type="entry name" value="RuvX"/>
    <property type="match status" value="1"/>
</dbReference>
<dbReference type="SMART" id="SM00732">
    <property type="entry name" value="YqgFc"/>
    <property type="match status" value="1"/>
</dbReference>
<dbReference type="SUPFAM" id="SSF53098">
    <property type="entry name" value="Ribonuclease H-like"/>
    <property type="match status" value="1"/>
</dbReference>
<feature type="chain" id="PRO_0000172088" description="Putative pre-16S rRNA nuclease">
    <location>
        <begin position="1"/>
        <end position="142"/>
    </location>
</feature>
<accession>Q6F101</accession>
<evidence type="ECO:0000255" key="1">
    <source>
        <dbReference type="HAMAP-Rule" id="MF_00651"/>
    </source>
</evidence>
<reference key="1">
    <citation type="submission" date="2004-06" db="EMBL/GenBank/DDBJ databases">
        <authorList>
            <person name="Birren B.W."/>
            <person name="Stange-Thomann N."/>
            <person name="Hafez N."/>
            <person name="DeCaprio D."/>
            <person name="Fisher S."/>
            <person name="Butler J."/>
            <person name="Elkins T."/>
            <person name="Kodira C.D."/>
            <person name="Major J."/>
            <person name="Wang S."/>
            <person name="Nicol R."/>
            <person name="Nusbaum C."/>
        </authorList>
    </citation>
    <scope>NUCLEOTIDE SEQUENCE [LARGE SCALE GENOMIC DNA]</scope>
    <source>
        <strain>ATCC 33453 / NBRC 100688 / NCTC 11704 / L1</strain>
    </source>
</reference>
<name>YQGF_MESFL</name>
<comment type="function">
    <text evidence="1">Could be a nuclease involved in processing of the 5'-end of pre-16S rRNA.</text>
</comment>
<comment type="subcellular location">
    <subcellularLocation>
        <location evidence="1">Cytoplasm</location>
    </subcellularLocation>
</comment>
<comment type="similarity">
    <text evidence="1">Belongs to the YqgF nuclease family.</text>
</comment>
<protein>
    <recommendedName>
        <fullName evidence="1">Putative pre-16S rRNA nuclease</fullName>
        <ecNumber evidence="1">3.1.-.-</ecNumber>
    </recommendedName>
</protein>
<proteinExistence type="inferred from homology"/>
<sequence length="142" mass="16243">MSNILGLDVGSKTIGLASSTGNVAKKEINLKFEEWNFEEGVSLLTEFIKDKSFDTFVFGYPKNMNGSIGERAEMVDYFIEGFMVYNPEIKEEQIIRIDERRTTKMAKSIMIEAGLSRQKQKENKDTLAAQLILETYLEKIKK</sequence>
<keyword id="KW-0963">Cytoplasm</keyword>
<keyword id="KW-0378">Hydrolase</keyword>
<keyword id="KW-0540">Nuclease</keyword>
<keyword id="KW-1185">Reference proteome</keyword>
<keyword id="KW-0690">Ribosome biogenesis</keyword>
<gene>
    <name type="ordered locus">Mfl464</name>
</gene>